<organism>
    <name type="scientific">Hevea brasiliensis</name>
    <name type="common">Para rubber tree</name>
    <name type="synonym">Siphonia brasiliensis</name>
    <dbReference type="NCBI Taxonomy" id="3981"/>
    <lineage>
        <taxon>Eukaryota</taxon>
        <taxon>Viridiplantae</taxon>
        <taxon>Streptophyta</taxon>
        <taxon>Embryophyta</taxon>
        <taxon>Tracheophyta</taxon>
        <taxon>Spermatophyta</taxon>
        <taxon>Magnoliopsida</taxon>
        <taxon>eudicotyledons</taxon>
        <taxon>Gunneridae</taxon>
        <taxon>Pentapetalae</taxon>
        <taxon>rosids</taxon>
        <taxon>fabids</taxon>
        <taxon>Malpighiales</taxon>
        <taxon>Euphorbiaceae</taxon>
        <taxon>Crotonoideae</taxon>
        <taxon>Micrandreae</taxon>
        <taxon>Hevea</taxon>
    </lineage>
</organism>
<evidence type="ECO:0000250" key="1"/>
<evidence type="ECO:0000305" key="2"/>
<comment type="function">
    <text>Destroys superoxide anion radicals which are normally produced within the cells and which are toxic to biological systems.</text>
</comment>
<comment type="catalytic activity">
    <reaction>
        <text>2 superoxide + 2 H(+) = H2O2 + O2</text>
        <dbReference type="Rhea" id="RHEA:20696"/>
        <dbReference type="ChEBI" id="CHEBI:15378"/>
        <dbReference type="ChEBI" id="CHEBI:15379"/>
        <dbReference type="ChEBI" id="CHEBI:16240"/>
        <dbReference type="ChEBI" id="CHEBI:18421"/>
        <dbReference type="EC" id="1.15.1.1"/>
    </reaction>
</comment>
<comment type="cofactor">
    <cofactor evidence="1">
        <name>Mn(2+)</name>
        <dbReference type="ChEBI" id="CHEBI:29035"/>
    </cofactor>
    <text evidence="1">Binds 1 Mn(2+) ion per subunit.</text>
</comment>
<comment type="subunit">
    <text>Homotetramer.</text>
</comment>
<comment type="subcellular location">
    <subcellularLocation>
        <location>Mitochondrion matrix</location>
    </subcellularLocation>
</comment>
<comment type="tissue specificity">
    <text>Present in all tissues examined (leaf, petiole, root, latex, callus) with young leaves showing the highest levels in intact plants.</text>
</comment>
<comment type="similarity">
    <text evidence="2">Belongs to the iron/manganese superoxide dismutase family.</text>
</comment>
<proteinExistence type="evidence at transcript level"/>
<feature type="transit peptide" description="Mitochondrion" evidence="1">
    <location>
        <begin position="1"/>
        <end position="27"/>
    </location>
</feature>
<feature type="chain" id="PRO_0000032894" description="Superoxide dismutase [Mn], mitochondrial">
    <location>
        <begin position="28"/>
        <end position="233"/>
    </location>
</feature>
<feature type="binding site" evidence="1">
    <location>
        <position position="55"/>
    </location>
    <ligand>
        <name>Mn(2+)</name>
        <dbReference type="ChEBI" id="CHEBI:29035"/>
    </ligand>
</feature>
<feature type="binding site" evidence="1">
    <location>
        <position position="103"/>
    </location>
    <ligand>
        <name>Mn(2+)</name>
        <dbReference type="ChEBI" id="CHEBI:29035"/>
    </ligand>
</feature>
<feature type="binding site" evidence="1">
    <location>
        <position position="192"/>
    </location>
    <ligand>
        <name>Mn(2+)</name>
        <dbReference type="ChEBI" id="CHEBI:29035"/>
    </ligand>
</feature>
<feature type="binding site" evidence="1">
    <location>
        <position position="196"/>
    </location>
    <ligand>
        <name>Mn(2+)</name>
        <dbReference type="ChEBI" id="CHEBI:29035"/>
    </ligand>
</feature>
<reference key="1">
    <citation type="journal article" date="1993" name="Plant Mol. Biol.">
        <title>Molecular cloning, characterization and expression of Mn-superoxide dismutase from the rubber tree (Hevea brasiliensis).</title>
        <authorList>
            <person name="Miao Z."/>
            <person name="Gaynor J.J."/>
        </authorList>
    </citation>
    <scope>NUCLEOTIDE SEQUENCE</scope>
    <source>
        <tissue>Leaf</tissue>
    </source>
</reference>
<gene>
    <name type="primary">SODA</name>
</gene>
<keyword id="KW-0464">Manganese</keyword>
<keyword id="KW-0479">Metal-binding</keyword>
<keyword id="KW-0496">Mitochondrion</keyword>
<keyword id="KW-0560">Oxidoreductase</keyword>
<keyword id="KW-0809">Transit peptide</keyword>
<name>SODM_HEVBR</name>
<protein>
    <recommendedName>
        <fullName>Superoxide dismutase [Mn], mitochondrial</fullName>
        <ecNumber>1.15.1.1</ecNumber>
    </recommendedName>
</protein>
<accession>P35017</accession>
<sequence length="233" mass="25840">MALRSLVTRKNLPSAFKAATGLGQLRGLQTFSLPDLPYDYGALEPAISGEIMQLHHQKHHQTYITNYNKALEQLNDAIEKGDSAAVVKLQSAIKFNGGGHVNHSIFWKNLAPVREGGGELPHGSLGWAIDADFGSLEKLIQLMNAEGAALQGSGWVWLALDKELKKLVVETTANQDPLVTKGPTLVPLLGIDVWEHAYYLQYKNVRPDYLKNIWKVMNWKYASEVYAKECPSS</sequence>
<dbReference type="EC" id="1.15.1.1"/>
<dbReference type="EMBL" id="L11707">
    <property type="protein sequence ID" value="AAA16792.1"/>
    <property type="molecule type" value="Unassigned_DNA"/>
</dbReference>
<dbReference type="PIR" id="S39492">
    <property type="entry name" value="S39492"/>
</dbReference>
<dbReference type="SMR" id="P35017"/>
<dbReference type="Allergome" id="380">
    <property type="allergen name" value="Hev b 10"/>
</dbReference>
<dbReference type="Allergome" id="381">
    <property type="allergen name" value="Hev b 10.0101"/>
</dbReference>
<dbReference type="OrthoDB" id="239262at2759"/>
<dbReference type="GO" id="GO:0005759">
    <property type="term" value="C:mitochondrial matrix"/>
    <property type="evidence" value="ECO:0007669"/>
    <property type="project" value="UniProtKB-SubCell"/>
</dbReference>
<dbReference type="GO" id="GO:0030145">
    <property type="term" value="F:manganese ion binding"/>
    <property type="evidence" value="ECO:0007669"/>
    <property type="project" value="TreeGrafter"/>
</dbReference>
<dbReference type="GO" id="GO:0004784">
    <property type="term" value="F:superoxide dismutase activity"/>
    <property type="evidence" value="ECO:0007669"/>
    <property type="project" value="UniProtKB-EC"/>
</dbReference>
<dbReference type="FunFam" id="1.10.287.990:FF:000001">
    <property type="entry name" value="Superoxide dismutase"/>
    <property type="match status" value="1"/>
</dbReference>
<dbReference type="FunFam" id="3.55.40.20:FF:000002">
    <property type="entry name" value="Superoxide dismutase"/>
    <property type="match status" value="1"/>
</dbReference>
<dbReference type="Gene3D" id="1.10.287.990">
    <property type="entry name" value="Fe,Mn superoxide dismutase (SOD) domain"/>
    <property type="match status" value="1"/>
</dbReference>
<dbReference type="Gene3D" id="3.55.40.20">
    <property type="entry name" value="Iron/manganese superoxide dismutase, C-terminal domain"/>
    <property type="match status" value="1"/>
</dbReference>
<dbReference type="InterPro" id="IPR050265">
    <property type="entry name" value="Fe/Mn_Superoxide_Dismutase"/>
</dbReference>
<dbReference type="InterPro" id="IPR001189">
    <property type="entry name" value="Mn/Fe_SOD"/>
</dbReference>
<dbReference type="InterPro" id="IPR019833">
    <property type="entry name" value="Mn/Fe_SOD_BS"/>
</dbReference>
<dbReference type="InterPro" id="IPR019832">
    <property type="entry name" value="Mn/Fe_SOD_C"/>
</dbReference>
<dbReference type="InterPro" id="IPR019831">
    <property type="entry name" value="Mn/Fe_SOD_N"/>
</dbReference>
<dbReference type="InterPro" id="IPR036324">
    <property type="entry name" value="Mn/Fe_SOD_N_sf"/>
</dbReference>
<dbReference type="InterPro" id="IPR036314">
    <property type="entry name" value="SOD_C_sf"/>
</dbReference>
<dbReference type="PANTHER" id="PTHR11404">
    <property type="entry name" value="SUPEROXIDE DISMUTASE 2"/>
    <property type="match status" value="1"/>
</dbReference>
<dbReference type="PANTHER" id="PTHR11404:SF6">
    <property type="entry name" value="SUPEROXIDE DISMUTASE [MN], MITOCHONDRIAL"/>
    <property type="match status" value="1"/>
</dbReference>
<dbReference type="Pfam" id="PF02777">
    <property type="entry name" value="Sod_Fe_C"/>
    <property type="match status" value="1"/>
</dbReference>
<dbReference type="Pfam" id="PF00081">
    <property type="entry name" value="Sod_Fe_N"/>
    <property type="match status" value="1"/>
</dbReference>
<dbReference type="PIRSF" id="PIRSF000349">
    <property type="entry name" value="SODismutase"/>
    <property type="match status" value="1"/>
</dbReference>
<dbReference type="PRINTS" id="PR01703">
    <property type="entry name" value="MNSODISMTASE"/>
</dbReference>
<dbReference type="SUPFAM" id="SSF54719">
    <property type="entry name" value="Fe,Mn superoxide dismutase (SOD), C-terminal domain"/>
    <property type="match status" value="1"/>
</dbReference>
<dbReference type="SUPFAM" id="SSF46609">
    <property type="entry name" value="Fe,Mn superoxide dismutase (SOD), N-terminal domain"/>
    <property type="match status" value="1"/>
</dbReference>
<dbReference type="PROSITE" id="PS00088">
    <property type="entry name" value="SOD_MN"/>
    <property type="match status" value="1"/>
</dbReference>